<protein>
    <recommendedName>
        <fullName evidence="1">Large ribosomal subunit protein bL34</fullName>
    </recommendedName>
    <alternativeName>
        <fullName evidence="2">50S ribosomal protein L34</fullName>
    </alternativeName>
</protein>
<keyword id="KW-0687">Ribonucleoprotein</keyword>
<keyword id="KW-0689">Ribosomal protein</keyword>
<evidence type="ECO:0000255" key="1">
    <source>
        <dbReference type="HAMAP-Rule" id="MF_00391"/>
    </source>
</evidence>
<evidence type="ECO:0000305" key="2"/>
<name>RL34_HAEIE</name>
<organism>
    <name type="scientific">Haemophilus influenzae (strain PittEE)</name>
    <dbReference type="NCBI Taxonomy" id="374930"/>
    <lineage>
        <taxon>Bacteria</taxon>
        <taxon>Pseudomonadati</taxon>
        <taxon>Pseudomonadota</taxon>
        <taxon>Gammaproteobacteria</taxon>
        <taxon>Pasteurellales</taxon>
        <taxon>Pasteurellaceae</taxon>
        <taxon>Haemophilus</taxon>
    </lineage>
</organism>
<gene>
    <name evidence="1" type="primary">rpmH</name>
    <name type="ordered locus">CGSHiEE_06980</name>
</gene>
<dbReference type="EMBL" id="CP000671">
    <property type="protein sequence ID" value="ABQ98725.1"/>
    <property type="molecule type" value="Genomic_DNA"/>
</dbReference>
<dbReference type="SMR" id="A5UD74"/>
<dbReference type="KEGG" id="hip:CGSHiEE_06980"/>
<dbReference type="HOGENOM" id="CLU_129938_2_0_6"/>
<dbReference type="GO" id="GO:1990904">
    <property type="term" value="C:ribonucleoprotein complex"/>
    <property type="evidence" value="ECO:0007669"/>
    <property type="project" value="UniProtKB-KW"/>
</dbReference>
<dbReference type="GO" id="GO:0005840">
    <property type="term" value="C:ribosome"/>
    <property type="evidence" value="ECO:0007669"/>
    <property type="project" value="UniProtKB-KW"/>
</dbReference>
<dbReference type="GO" id="GO:0003735">
    <property type="term" value="F:structural constituent of ribosome"/>
    <property type="evidence" value="ECO:0007669"/>
    <property type="project" value="InterPro"/>
</dbReference>
<dbReference type="GO" id="GO:0006412">
    <property type="term" value="P:translation"/>
    <property type="evidence" value="ECO:0007669"/>
    <property type="project" value="UniProtKB-UniRule"/>
</dbReference>
<dbReference type="FunFam" id="1.10.287.3980:FF:000001">
    <property type="entry name" value="Mitochondrial ribosomal protein L34"/>
    <property type="match status" value="1"/>
</dbReference>
<dbReference type="Gene3D" id="1.10.287.3980">
    <property type="match status" value="1"/>
</dbReference>
<dbReference type="HAMAP" id="MF_00391">
    <property type="entry name" value="Ribosomal_bL34"/>
    <property type="match status" value="1"/>
</dbReference>
<dbReference type="InterPro" id="IPR000271">
    <property type="entry name" value="Ribosomal_bL34"/>
</dbReference>
<dbReference type="InterPro" id="IPR020939">
    <property type="entry name" value="Ribosomal_bL34_CS"/>
</dbReference>
<dbReference type="NCBIfam" id="TIGR01030">
    <property type="entry name" value="rpmH_bact"/>
    <property type="match status" value="1"/>
</dbReference>
<dbReference type="PANTHER" id="PTHR14503:SF4">
    <property type="entry name" value="LARGE RIBOSOMAL SUBUNIT PROTEIN BL34M"/>
    <property type="match status" value="1"/>
</dbReference>
<dbReference type="PANTHER" id="PTHR14503">
    <property type="entry name" value="MITOCHONDRIAL RIBOSOMAL PROTEIN 34 FAMILY MEMBER"/>
    <property type="match status" value="1"/>
</dbReference>
<dbReference type="Pfam" id="PF00468">
    <property type="entry name" value="Ribosomal_L34"/>
    <property type="match status" value="1"/>
</dbReference>
<dbReference type="PROSITE" id="PS00784">
    <property type="entry name" value="RIBOSOMAL_L34"/>
    <property type="match status" value="1"/>
</dbReference>
<accession>A5UD74</accession>
<feature type="chain" id="PRO_1000013349" description="Large ribosomal subunit protein bL34">
    <location>
        <begin position="1"/>
        <end position="44"/>
    </location>
</feature>
<reference key="1">
    <citation type="journal article" date="2007" name="Genome Biol.">
        <title>Characterization and modeling of the Haemophilus influenzae core and supragenomes based on the complete genomic sequences of Rd and 12 clinical nontypeable strains.</title>
        <authorList>
            <person name="Hogg J.S."/>
            <person name="Hu F.Z."/>
            <person name="Janto B."/>
            <person name="Boissy R."/>
            <person name="Hayes J."/>
            <person name="Keefe R."/>
            <person name="Post J.C."/>
            <person name="Ehrlich G.D."/>
        </authorList>
    </citation>
    <scope>NUCLEOTIDE SEQUENCE [LARGE SCALE GENOMIC DNA]</scope>
    <source>
        <strain>PittEE</strain>
    </source>
</reference>
<sequence length="44" mass="5098">MKRTFQPSVLKRSRTHGFRARMATKNGRQVLARRRAKGRKSLSA</sequence>
<comment type="similarity">
    <text evidence="1">Belongs to the bacterial ribosomal protein bL34 family.</text>
</comment>
<proteinExistence type="inferred from homology"/>